<evidence type="ECO:0000250" key="1"/>
<evidence type="ECO:0000255" key="2">
    <source>
        <dbReference type="PROSITE-ProRule" id="PRU00133"/>
    </source>
</evidence>
<evidence type="ECO:0000256" key="3">
    <source>
        <dbReference type="SAM" id="MobiDB-lite"/>
    </source>
</evidence>
<evidence type="ECO:0000305" key="4"/>
<accession>Q39117</accession>
<accession>O48592</accession>
<accession>Q8LBM5</accession>
<name>TGT2_ARATH</name>
<organism>
    <name type="scientific">Arabidopsis thaliana</name>
    <name type="common">Mouse-ear cress</name>
    <dbReference type="NCBI Taxonomy" id="3702"/>
    <lineage>
        <taxon>Eukaryota</taxon>
        <taxon>Viridiplantae</taxon>
        <taxon>Streptophyta</taxon>
        <taxon>Embryophyta</taxon>
        <taxon>Tracheophyta</taxon>
        <taxon>Spermatophyta</taxon>
        <taxon>Magnoliopsida</taxon>
        <taxon>eudicotyledons</taxon>
        <taxon>Gunneridae</taxon>
        <taxon>Pentapetalae</taxon>
        <taxon>rosids</taxon>
        <taxon>malvids</taxon>
        <taxon>Brassicales</taxon>
        <taxon>Brassicaceae</taxon>
        <taxon>Camelineae</taxon>
        <taxon>Arabidopsis</taxon>
    </lineage>
</organism>
<dbReference type="EMBL" id="X72780">
    <property type="protein sequence ID" value="CAA51289.1"/>
    <property type="molecule type" value="Genomic_DNA"/>
</dbReference>
<dbReference type="EMBL" id="AJ003217">
    <property type="protein sequence ID" value="CAA05997.1"/>
    <property type="molecule type" value="Genomic_DNA"/>
</dbReference>
<dbReference type="EMBL" id="AC079283">
    <property type="protein sequence ID" value="AAG51145.1"/>
    <property type="molecule type" value="Genomic_DNA"/>
</dbReference>
<dbReference type="EMBL" id="CP002684">
    <property type="protein sequence ID" value="AEE35899.1"/>
    <property type="molecule type" value="Genomic_DNA"/>
</dbReference>
<dbReference type="EMBL" id="BT030363">
    <property type="protein sequence ID" value="ABO38776.1"/>
    <property type="molecule type" value="mRNA"/>
</dbReference>
<dbReference type="EMBL" id="AY087117">
    <property type="protein sequence ID" value="AAM64675.1"/>
    <property type="status" value="ALT_INIT"/>
    <property type="molecule type" value="mRNA"/>
</dbReference>
<dbReference type="PIR" id="S39484">
    <property type="entry name" value="S39484"/>
</dbReference>
<dbReference type="SMR" id="Q39117"/>
<dbReference type="BioGRID" id="29243">
    <property type="interactions" value="1"/>
</dbReference>
<dbReference type="IntAct" id="Q39117">
    <property type="interactions" value="1"/>
</dbReference>
<dbReference type="STRING" id="3702.Q39117"/>
<dbReference type="iPTMnet" id="Q39117"/>
<dbReference type="PaxDb" id="3702-AT1G76890.2"/>
<dbReference type="ProteomicsDB" id="234269"/>
<dbReference type="EnsemblPlants" id="AT1G76890.2">
    <property type="protein sequence ID" value="AT1G76890.2"/>
    <property type="gene ID" value="AT1G76890"/>
</dbReference>
<dbReference type="Gramene" id="AT1G76890.2">
    <property type="protein sequence ID" value="AT1G76890.2"/>
    <property type="gene ID" value="AT1G76890"/>
</dbReference>
<dbReference type="KEGG" id="ath:AT1G76890"/>
<dbReference type="Araport" id="AT1G76890"/>
<dbReference type="TAIR" id="AT1G76890">
    <property type="gene designation" value="GT2"/>
</dbReference>
<dbReference type="eggNOG" id="KOG4282">
    <property type="taxonomic scope" value="Eukaryota"/>
</dbReference>
<dbReference type="HOGENOM" id="CLU_013796_1_1_1"/>
<dbReference type="InParanoid" id="Q39117"/>
<dbReference type="OMA" id="TTMKMGN"/>
<dbReference type="OrthoDB" id="691673at2759"/>
<dbReference type="PhylomeDB" id="Q39117"/>
<dbReference type="PRO" id="PR:Q39117"/>
<dbReference type="Proteomes" id="UP000006548">
    <property type="component" value="Chromosome 1"/>
</dbReference>
<dbReference type="ExpressionAtlas" id="Q39117">
    <property type="expression patterns" value="baseline and differential"/>
</dbReference>
<dbReference type="GO" id="GO:0005634">
    <property type="term" value="C:nucleus"/>
    <property type="evidence" value="ECO:0007669"/>
    <property type="project" value="UniProtKB-SubCell"/>
</dbReference>
<dbReference type="GO" id="GO:0003677">
    <property type="term" value="F:DNA binding"/>
    <property type="evidence" value="ECO:0007669"/>
    <property type="project" value="UniProtKB-KW"/>
</dbReference>
<dbReference type="GO" id="GO:0003700">
    <property type="term" value="F:DNA-binding transcription factor activity"/>
    <property type="evidence" value="ECO:0000250"/>
    <property type="project" value="TAIR"/>
</dbReference>
<dbReference type="CDD" id="cd12203">
    <property type="entry name" value="GT1"/>
    <property type="match status" value="2"/>
</dbReference>
<dbReference type="FunFam" id="1.10.10.60:FF:000061">
    <property type="entry name" value="Trihelix transcription factor GT-2"/>
    <property type="match status" value="1"/>
</dbReference>
<dbReference type="FunFam" id="1.10.10.60:FF:000092">
    <property type="entry name" value="Trihelix transcription factor GT-2"/>
    <property type="match status" value="1"/>
</dbReference>
<dbReference type="Gene3D" id="1.10.10.60">
    <property type="entry name" value="Homeodomain-like"/>
    <property type="match status" value="2"/>
</dbReference>
<dbReference type="InterPro" id="IPR044822">
    <property type="entry name" value="Myb_DNA-bind_4"/>
</dbReference>
<dbReference type="InterPro" id="IPR001005">
    <property type="entry name" value="SANT/Myb"/>
</dbReference>
<dbReference type="PANTHER" id="PTHR21654">
    <property type="entry name" value="FI21293P1"/>
    <property type="match status" value="1"/>
</dbReference>
<dbReference type="PANTHER" id="PTHR21654:SF73">
    <property type="entry name" value="TRIHELIX TRANSCRIPTION FACTOR GT-2"/>
    <property type="match status" value="1"/>
</dbReference>
<dbReference type="Pfam" id="PF13837">
    <property type="entry name" value="Myb_DNA-bind_4"/>
    <property type="match status" value="2"/>
</dbReference>
<dbReference type="SMART" id="SM00717">
    <property type="entry name" value="SANT"/>
    <property type="match status" value="2"/>
</dbReference>
<dbReference type="PROSITE" id="PS50090">
    <property type="entry name" value="MYB_LIKE"/>
    <property type="match status" value="2"/>
</dbReference>
<reference key="1">
    <citation type="journal article" date="1993" name="Plant Mol. Biol.">
        <title>DNA binding factor GT-2 from Arabidopsis.</title>
        <authorList>
            <person name="Kuhn R.M."/>
            <person name="Caspar T."/>
            <person name="Dehesh K."/>
            <person name="Quail P.H."/>
        </authorList>
    </citation>
    <scope>NUCLEOTIDE SEQUENCE [GENOMIC DNA]</scope>
</reference>
<reference key="2">
    <citation type="journal article" date="1998" name="Proc. Natl. Acad. Sci. U.S.A.">
        <title>The trihelix DNA-binding motif in higher plants is not restricted to the transcription factors GT-1 and GT-2.</title>
        <authorList>
            <person name="Smalle J.A.H."/>
            <person name="Kurepa J."/>
            <person name="Haegman M."/>
            <person name="Gielen J."/>
            <person name="Van Montagu M."/>
            <person name="Van Der Straeten D."/>
        </authorList>
    </citation>
    <scope>NUCLEOTIDE SEQUENCE [GENOMIC DNA]</scope>
</reference>
<reference key="3">
    <citation type="journal article" date="2000" name="Nature">
        <title>Sequence and analysis of chromosome 1 of the plant Arabidopsis thaliana.</title>
        <authorList>
            <person name="Theologis A."/>
            <person name="Ecker J.R."/>
            <person name="Palm C.J."/>
            <person name="Federspiel N.A."/>
            <person name="Kaul S."/>
            <person name="White O."/>
            <person name="Alonso J."/>
            <person name="Altafi H."/>
            <person name="Araujo R."/>
            <person name="Bowman C.L."/>
            <person name="Brooks S.Y."/>
            <person name="Buehler E."/>
            <person name="Chan A."/>
            <person name="Chao Q."/>
            <person name="Chen H."/>
            <person name="Cheuk R.F."/>
            <person name="Chin C.W."/>
            <person name="Chung M.K."/>
            <person name="Conn L."/>
            <person name="Conway A.B."/>
            <person name="Conway A.R."/>
            <person name="Creasy T.H."/>
            <person name="Dewar K."/>
            <person name="Dunn P."/>
            <person name="Etgu P."/>
            <person name="Feldblyum T.V."/>
            <person name="Feng J.-D."/>
            <person name="Fong B."/>
            <person name="Fujii C.Y."/>
            <person name="Gill J.E."/>
            <person name="Goldsmith A.D."/>
            <person name="Haas B."/>
            <person name="Hansen N.F."/>
            <person name="Hughes B."/>
            <person name="Huizar L."/>
            <person name="Hunter J.L."/>
            <person name="Jenkins J."/>
            <person name="Johnson-Hopson C."/>
            <person name="Khan S."/>
            <person name="Khaykin E."/>
            <person name="Kim C.J."/>
            <person name="Koo H.L."/>
            <person name="Kremenetskaia I."/>
            <person name="Kurtz D.B."/>
            <person name="Kwan A."/>
            <person name="Lam B."/>
            <person name="Langin-Hooper S."/>
            <person name="Lee A."/>
            <person name="Lee J.M."/>
            <person name="Lenz C.A."/>
            <person name="Li J.H."/>
            <person name="Li Y.-P."/>
            <person name="Lin X."/>
            <person name="Liu S.X."/>
            <person name="Liu Z.A."/>
            <person name="Luros J.S."/>
            <person name="Maiti R."/>
            <person name="Marziali A."/>
            <person name="Militscher J."/>
            <person name="Miranda M."/>
            <person name="Nguyen M."/>
            <person name="Nierman W.C."/>
            <person name="Osborne B.I."/>
            <person name="Pai G."/>
            <person name="Peterson J."/>
            <person name="Pham P.K."/>
            <person name="Rizzo M."/>
            <person name="Rooney T."/>
            <person name="Rowley D."/>
            <person name="Sakano H."/>
            <person name="Salzberg S.L."/>
            <person name="Schwartz J.R."/>
            <person name="Shinn P."/>
            <person name="Southwick A.M."/>
            <person name="Sun H."/>
            <person name="Tallon L.J."/>
            <person name="Tambunga G."/>
            <person name="Toriumi M.J."/>
            <person name="Town C.D."/>
            <person name="Utterback T."/>
            <person name="Van Aken S."/>
            <person name="Vaysberg M."/>
            <person name="Vysotskaia V.S."/>
            <person name="Walker M."/>
            <person name="Wu D."/>
            <person name="Yu G."/>
            <person name="Fraser C.M."/>
            <person name="Venter J.C."/>
            <person name="Davis R.W."/>
        </authorList>
    </citation>
    <scope>NUCLEOTIDE SEQUENCE [LARGE SCALE GENOMIC DNA]</scope>
    <source>
        <strain>cv. Columbia</strain>
    </source>
</reference>
<reference key="4">
    <citation type="journal article" date="2017" name="Plant J.">
        <title>Araport11: a complete reannotation of the Arabidopsis thaliana reference genome.</title>
        <authorList>
            <person name="Cheng C.Y."/>
            <person name="Krishnakumar V."/>
            <person name="Chan A.P."/>
            <person name="Thibaud-Nissen F."/>
            <person name="Schobel S."/>
            <person name="Town C.D."/>
        </authorList>
    </citation>
    <scope>GENOME REANNOTATION</scope>
    <source>
        <strain>cv. Columbia</strain>
    </source>
</reference>
<reference key="5">
    <citation type="submission" date="2007-03" db="EMBL/GenBank/DDBJ databases">
        <title>Arabidopsis ORF clones.</title>
        <authorList>
            <person name="Bautista V.R."/>
            <person name="Kim C.J."/>
            <person name="Chen H."/>
            <person name="Wu S.Y."/>
            <person name="De Los Reyes C."/>
            <person name="Ecker J.R."/>
        </authorList>
    </citation>
    <scope>NUCLEOTIDE SEQUENCE [LARGE SCALE MRNA]</scope>
    <source>
        <strain>cv. Columbia</strain>
    </source>
</reference>
<reference key="6">
    <citation type="submission" date="2002-03" db="EMBL/GenBank/DDBJ databases">
        <title>Full-length cDNA from Arabidopsis thaliana.</title>
        <authorList>
            <person name="Brover V.V."/>
            <person name="Troukhan M.E."/>
            <person name="Alexandrov N.A."/>
            <person name="Lu Y.-P."/>
            <person name="Flavell R.B."/>
            <person name="Feldmann K.A."/>
        </authorList>
    </citation>
    <scope>NUCLEOTIDE SEQUENCE [LARGE SCALE MRNA]</scope>
</reference>
<proteinExistence type="evidence at protein level"/>
<protein>
    <recommendedName>
        <fullName>Trihelix transcription factor GT-2</fullName>
    </recommendedName>
    <alternativeName>
        <fullName>Trihelix DNA-binding protein GT-2</fullName>
    </alternativeName>
</protein>
<feature type="chain" id="PRO_0000401379" description="Trihelix transcription factor GT-2">
    <location>
        <begin position="1"/>
        <end position="575"/>
    </location>
</feature>
<feature type="domain" description="Myb-like 1" evidence="2">
    <location>
        <begin position="40"/>
        <end position="98"/>
    </location>
</feature>
<feature type="domain" description="Myb-like 2" evidence="2">
    <location>
        <begin position="390"/>
        <end position="454"/>
    </location>
</feature>
<feature type="region of interest" description="Disordered" evidence="3">
    <location>
        <begin position="1"/>
        <end position="44"/>
    </location>
</feature>
<feature type="region of interest" description="Disordered" evidence="3">
    <location>
        <begin position="157"/>
        <end position="181"/>
    </location>
</feature>
<feature type="region of interest" description="Disordered" evidence="3">
    <location>
        <begin position="232"/>
        <end position="256"/>
    </location>
</feature>
<feature type="region of interest" description="Disordered" evidence="3">
    <location>
        <begin position="339"/>
        <end position="364"/>
    </location>
</feature>
<feature type="region of interest" description="Disordered" evidence="3">
    <location>
        <begin position="513"/>
        <end position="575"/>
    </location>
</feature>
<feature type="compositionally biased region" description="Low complexity" evidence="3">
    <location>
        <begin position="1"/>
        <end position="11"/>
    </location>
</feature>
<feature type="compositionally biased region" description="Low complexity" evidence="3">
    <location>
        <begin position="161"/>
        <end position="172"/>
    </location>
</feature>
<feature type="compositionally biased region" description="Low complexity" evidence="3">
    <location>
        <begin position="232"/>
        <end position="241"/>
    </location>
</feature>
<feature type="compositionally biased region" description="Polar residues" evidence="3">
    <location>
        <begin position="355"/>
        <end position="364"/>
    </location>
</feature>
<feature type="compositionally biased region" description="Acidic residues" evidence="3">
    <location>
        <begin position="528"/>
        <end position="555"/>
    </location>
</feature>
<feature type="compositionally biased region" description="Polar residues" evidence="3">
    <location>
        <begin position="561"/>
        <end position="575"/>
    </location>
</feature>
<feature type="sequence conflict" description="In Ref. 2; CAA05997." evidence="4" ref="2">
    <original>Q</original>
    <variation>H</variation>
    <location>
        <position position="344"/>
    </location>
</feature>
<feature type="sequence conflict" description="In Ref. 2; CAA05997." evidence="4" ref="2">
    <original>Q</original>
    <variation>L</variation>
    <location>
        <position position="506"/>
    </location>
</feature>
<feature type="sequence conflict" description="In Ref. 2; CAA05997." evidence="4" ref="2">
    <original>Q</original>
    <variation>L</variation>
    <location>
        <position position="514"/>
    </location>
</feature>
<sequence>MSGNSEGLLESSGGGVGGSVEEEKDMKMEETGEGAGSGGNRWPRPETLALLRIRSEMDKAFRDSTLKAPLWEEISRKMMELGYKRSSKKCKEKFENVYKYHKRTKEGRTGKSEGKTYRFFEELEAFETLSSYQPEPESQPAKSSAVITNAPATSSLIPWISSSNPSTEKSSSPLKHHHQVSVQPITTNPTFLAKQPSSTTPFPFYSSNNTTTVSQPPISNDLMNNVSSLNLFSSSTSSSTASDEEEDHHQVKSSRKKRKYWKGLFTKLTKELMEKQEKMQKRFLETLEYREKERISREEAWRVQEIGRINREHETLIHERSNAAAKDAAIISFLHKISGGQPQQPQQHNHKPSQRKQYQSDHSITFESKEPRAVLLDTTIKMGNYDNNHSVSPSSSRWPKTEVEALIRIRKNLEANYQENGTKGPLWEEISAGMRRLGYNRSAKRCKEKWENINKYFKKVKESNKKRPLDSKTCPYFHQLEALYNERNKSGAMPLPLPLMVTPQRQLLLSQETQTEFETDQREKVGDKEDEEEGESEEDEYDEEEEGEGDNETSEFEIVLNKTSSPMDINNNLFT</sequence>
<gene>
    <name type="primary">GT-2</name>
    <name type="ordered locus">At1g76890</name>
    <name type="ORF">F7O12.6</name>
</gene>
<keyword id="KW-0238">DNA-binding</keyword>
<keyword id="KW-0539">Nucleus</keyword>
<keyword id="KW-1185">Reference proteome</keyword>
<keyword id="KW-0677">Repeat</keyword>
<keyword id="KW-0804">Transcription</keyword>
<keyword id="KW-0805">Transcription regulation</keyword>
<comment type="function">
    <text evidence="1">Probable transcription factor that binds specific DNA sequence.</text>
</comment>
<comment type="interaction">
    <interactant intactId="EBI-25517023">
        <id>Q39117</id>
    </interactant>
    <interactant intactId="EBI-25506855">
        <id>O23160</id>
        <label>MYB73</label>
    </interactant>
    <organismsDiffer>false</organismsDiffer>
    <experiments>3</experiments>
</comment>
<comment type="subcellular location">
    <subcellularLocation>
        <location evidence="4">Nucleus</location>
    </subcellularLocation>
</comment>
<comment type="sequence caution" evidence="4">
    <conflict type="erroneous initiation">
        <sequence resource="EMBL-CDS" id="AAM64675"/>
    </conflict>
    <text>Truncated N-terminus.</text>
</comment>